<reference key="1">
    <citation type="journal article" date="1998" name="J. Neurosci.">
        <title>Persyn, a member of the synuclein family, has a distinct pattern of expression in the developing nervous system.</title>
        <authorList>
            <person name="Buchman V.L."/>
            <person name="Hunter H.J."/>
            <person name="Pinon L.G."/>
            <person name="Thompson J."/>
            <person name="Privalova E.M."/>
            <person name="Ninkina N.N."/>
            <person name="Davies A.M."/>
        </authorList>
    </citation>
    <scope>NUCLEOTIDE SEQUENCE</scope>
    <scope>CHARACTERIZATION</scope>
    <source>
        <strain>CD-1</strain>
        <tissue>Embryonic ganglion</tissue>
    </source>
</reference>
<reference key="2">
    <citation type="journal article" date="1999" name="Genomics">
        <title>Genomic structure and chromosomal localization of the mouse persyn gene.</title>
        <authorList>
            <person name="Alimova-Kost M.V."/>
            <person name="Ninkina N.N."/>
            <person name="Imreh S."/>
            <person name="Gnuchev N.V."/>
            <person name="Adu J."/>
            <person name="Davies A.M."/>
            <person name="Buchman V.L."/>
        </authorList>
    </citation>
    <scope>NUCLEOTIDE SEQUENCE [GENOMIC DNA / MRNA]</scope>
    <source>
        <strain>CD-1</strain>
    </source>
</reference>
<reference key="3">
    <citation type="journal article" date="2004" name="Genome Res.">
        <title>The status, quality, and expansion of the NIH full-length cDNA project: the Mammalian Gene Collection (MGC).</title>
        <authorList>
            <consortium name="The MGC Project Team"/>
        </authorList>
    </citation>
    <scope>NUCLEOTIDE SEQUENCE [LARGE SCALE MRNA]</scope>
    <source>
        <strain>C57BL/6J</strain>
        <tissue>Mammary gland</tissue>
    </source>
</reference>
<reference key="4">
    <citation type="journal article" date="1999" name="Exp. Cell Res.">
        <title>Developmentally regulated expression of persyn, a member of the synuclein family, in skin.</title>
        <authorList>
            <person name="Ninkina N.N."/>
            <person name="Privalova E.M."/>
            <person name="Pinon L.G."/>
            <person name="Davies A.M."/>
            <person name="Buchman V.L."/>
        </authorList>
    </citation>
    <scope>POSSIBLE FUNCTION IN SKIN</scope>
</reference>
<reference key="5">
    <citation type="journal article" date="2005" name="Cell. Mol. Neurobiol.">
        <title>Interaction of myocilin with gamma-synuclein affects its secretion and aggregation.</title>
        <authorList>
            <person name="Surgucheva I."/>
            <person name="Park B.C."/>
            <person name="Yue B.Y."/>
            <person name="Tomarev S."/>
            <person name="Surguchov A."/>
        </authorList>
    </citation>
    <scope>INTERACTION WITH MYOC</scope>
</reference>
<reference key="6">
    <citation type="journal article" date="2010" name="Cell">
        <title>A tissue-specific atlas of mouse protein phosphorylation and expression.</title>
        <authorList>
            <person name="Huttlin E.L."/>
            <person name="Jedrychowski M.P."/>
            <person name="Elias J.E."/>
            <person name="Goswami T."/>
            <person name="Rad R."/>
            <person name="Beausoleil S.A."/>
            <person name="Villen J."/>
            <person name="Haas W."/>
            <person name="Sowa M.E."/>
            <person name="Gygi S.P."/>
        </authorList>
    </citation>
    <scope>IDENTIFICATION BY MASS SPECTROMETRY [LARGE SCALE ANALYSIS]</scope>
    <source>
        <tissue>Brain</tissue>
        <tissue>Brown adipose tissue</tissue>
        <tissue>Heart</tissue>
        <tissue>Kidney</tissue>
        <tissue>Lung</tissue>
    </source>
</reference>
<reference key="7">
    <citation type="journal article" date="2010" name="Science">
        <title>Alpha-synuclein promotes SNARE-complex assembly in vivo and in vitro.</title>
        <authorList>
            <person name="Burre J."/>
            <person name="Sharma M."/>
            <person name="Tsetsenis T."/>
            <person name="Buchman V."/>
            <person name="Etherton M.R."/>
            <person name="Suedhof T.C."/>
        </authorList>
    </citation>
    <scope>DISRUPTION PHENOTYPE</scope>
</reference>
<name>SYUG_MOUSE</name>
<sequence length="123" mass="13160">MDVFKKGFSIAKEGVVGAVEKTKQGVTEAAEKTKEGVMYVGTKTKENVVQSVTSVAEKTKEQANAVSEAVVSSVNTVANKTVEEAENIVVTTGVVRKEDLEPPAQDQEAKEQEENEEAKSGED</sequence>
<comment type="function">
    <text evidence="1">Plays a role in neurofilament network integrity. May be involved in modulating axonal architecture during development and in the adult. In vitro, increases the susceptibility of neurofilament-H to calcium-dependent proteases. May also function in modulating the keratin network in skin. Activates the MAPK and Elk-1 signal transduction pathway (By similarity).</text>
</comment>
<comment type="subunit">
    <text evidence="5">May be a centrosome-associated protein. Interacts with MYOC; affects its secretion and its aggregation.</text>
</comment>
<comment type="subcellular location">
    <subcellularLocation>
        <location evidence="1">Cytoplasm</location>
        <location evidence="1">Perinuclear region</location>
    </subcellularLocation>
    <subcellularLocation>
        <location evidence="1">Cytoplasm</location>
        <location evidence="1">Cytoskeleton</location>
        <location evidence="1">Microtubule organizing center</location>
        <location evidence="1">Centrosome</location>
    </subcellularLocation>
    <subcellularLocation>
        <location evidence="1">Cytoplasm</location>
        <location evidence="1">Cytoskeleton</location>
        <location evidence="1">Spindle</location>
    </subcellularLocation>
    <text evidence="1">Associated with centrosomes in several interphase cells. In mitotic cells, localized to the poles of the spindle (By similarity).</text>
</comment>
<comment type="tissue specificity">
    <text>Highly expressed in brain, particularly in the substantia nigra. Also expressed in the corpus callosum, heart, skeletal muscle, ovary, testis, colon and spleen. Weak expression in pancreas, kidney and lung. Expressed predominantly in the cell bodies and axons of primary sensory neurons, sympathetic neurons and motoneurons.</text>
</comment>
<comment type="developmental stage">
    <text>Developmentally expressed in primary sensory neurons and motoneurons. In trigeminal ganglia, expression increases between embryonic day 10 and day 12. High levels are maintained here throughout later stages of development and in adulthood.</text>
</comment>
<comment type="PTM">
    <text evidence="1">Phosphorylated. Phosphorylation by GRK5 appears to occur on residues distinct from the residue phosphorylated by other kinases (By similarity).</text>
</comment>
<comment type="disruption phenotype">
    <text evidence="6">Simultaneous knockout of SNCA, SNCB and SNCG exhibit an age-dependent decrease in SNARE-complex assembly. Thus, synucleins are required for maintaining normal SNARE-complex assembly during aging in mice.</text>
</comment>
<comment type="similarity">
    <text evidence="7">Belongs to the synuclein family.</text>
</comment>
<gene>
    <name type="primary">Sncg</name>
    <name type="synonym">Persyn</name>
</gene>
<feature type="chain" id="PRO_0000184039" description="Gamma-synuclein">
    <location>
        <begin position="1"/>
        <end position="123"/>
    </location>
</feature>
<feature type="repeat" description="1">
    <location>
        <begin position="20"/>
        <end position="30"/>
    </location>
</feature>
<feature type="repeat" description="2">
    <location>
        <begin position="31"/>
        <end position="41"/>
    </location>
</feature>
<feature type="repeat" description="3; approximate">
    <location>
        <begin position="42"/>
        <end position="56"/>
    </location>
</feature>
<feature type="repeat" description="4">
    <location>
        <begin position="57"/>
        <end position="67"/>
    </location>
</feature>
<feature type="region of interest" description="4 X 11 AA tandem repeats of [EGSA]-K-T-K-[EQ]-[GQ]-V-X(4)">
    <location>
        <begin position="20"/>
        <end position="67"/>
    </location>
</feature>
<feature type="region of interest" description="Disordered" evidence="4">
    <location>
        <begin position="91"/>
        <end position="123"/>
    </location>
</feature>
<feature type="compositionally biased region" description="Basic and acidic residues" evidence="4">
    <location>
        <begin position="107"/>
        <end position="123"/>
    </location>
</feature>
<feature type="modified residue" description="Phosphoserine" evidence="3">
    <location>
        <position position="67"/>
    </location>
</feature>
<feature type="modified residue" description="Phosphoserine" evidence="3">
    <location>
        <position position="72"/>
    </location>
</feature>
<feature type="modified residue" description="Phosphoserine; by BARK1, CaMK2 and CK2" evidence="2">
    <location>
        <position position="120"/>
    </location>
</feature>
<proteinExistence type="evidence at protein level"/>
<evidence type="ECO:0000250" key="1"/>
<evidence type="ECO:0000250" key="2">
    <source>
        <dbReference type="UniProtKB" id="O76070"/>
    </source>
</evidence>
<evidence type="ECO:0000250" key="3">
    <source>
        <dbReference type="UniProtKB" id="Q63544"/>
    </source>
</evidence>
<evidence type="ECO:0000256" key="4">
    <source>
        <dbReference type="SAM" id="MobiDB-lite"/>
    </source>
</evidence>
<evidence type="ECO:0000269" key="5">
    <source>
    </source>
</evidence>
<evidence type="ECO:0000269" key="6">
    <source>
    </source>
</evidence>
<evidence type="ECO:0000305" key="7"/>
<keyword id="KW-0963">Cytoplasm</keyword>
<keyword id="KW-0206">Cytoskeleton</keyword>
<keyword id="KW-0597">Phosphoprotein</keyword>
<keyword id="KW-1185">Reference proteome</keyword>
<keyword id="KW-0677">Repeat</keyword>
<organism>
    <name type="scientific">Mus musculus</name>
    <name type="common">Mouse</name>
    <dbReference type="NCBI Taxonomy" id="10090"/>
    <lineage>
        <taxon>Eukaryota</taxon>
        <taxon>Metazoa</taxon>
        <taxon>Chordata</taxon>
        <taxon>Craniata</taxon>
        <taxon>Vertebrata</taxon>
        <taxon>Euteleostomi</taxon>
        <taxon>Mammalia</taxon>
        <taxon>Eutheria</taxon>
        <taxon>Euarchontoglires</taxon>
        <taxon>Glires</taxon>
        <taxon>Rodentia</taxon>
        <taxon>Myomorpha</taxon>
        <taxon>Muroidea</taxon>
        <taxon>Muridae</taxon>
        <taxon>Murinae</taxon>
        <taxon>Mus</taxon>
        <taxon>Mus</taxon>
    </lineage>
</organism>
<dbReference type="EMBL" id="AF017255">
    <property type="protein sequence ID" value="AAC98893.1"/>
    <property type="molecule type" value="mRNA"/>
</dbReference>
<dbReference type="EMBL" id="AF099986">
    <property type="protein sequence ID" value="AAD19899.1"/>
    <property type="molecule type" value="Genomic_DNA"/>
</dbReference>
<dbReference type="EMBL" id="AF099984">
    <property type="protein sequence ID" value="AAD19899.1"/>
    <property type="status" value="JOINED"/>
    <property type="molecule type" value="Genomic_DNA"/>
</dbReference>
<dbReference type="EMBL" id="AF099985">
    <property type="protein sequence ID" value="AAD19899.1"/>
    <property type="status" value="JOINED"/>
    <property type="molecule type" value="Genomic_DNA"/>
</dbReference>
<dbReference type="EMBL" id="BC028508">
    <property type="protein sequence ID" value="AAH28508.1"/>
    <property type="molecule type" value="mRNA"/>
</dbReference>
<dbReference type="CCDS" id="CCDS26937.1"/>
<dbReference type="RefSeq" id="NP_035560.1">
    <property type="nucleotide sequence ID" value="NM_011430.3"/>
</dbReference>
<dbReference type="SMR" id="Q9Z0F7"/>
<dbReference type="BioGRID" id="203366">
    <property type="interactions" value="1"/>
</dbReference>
<dbReference type="FunCoup" id="Q9Z0F7">
    <property type="interactions" value="56"/>
</dbReference>
<dbReference type="STRING" id="10090.ENSMUSP00000023826"/>
<dbReference type="GlyGen" id="Q9Z0F7">
    <property type="glycosylation" value="2 sites, 1 N-linked glycan (1 site), 1 O-linked glycan (1 site)"/>
</dbReference>
<dbReference type="iPTMnet" id="Q9Z0F7"/>
<dbReference type="PhosphoSitePlus" id="Q9Z0F7"/>
<dbReference type="jPOST" id="Q9Z0F7"/>
<dbReference type="PaxDb" id="10090-ENSMUSP00000023826"/>
<dbReference type="ProteomicsDB" id="262922"/>
<dbReference type="Antibodypedia" id="2808">
    <property type="antibodies" value="462 antibodies from 41 providers"/>
</dbReference>
<dbReference type="DNASU" id="20618"/>
<dbReference type="Ensembl" id="ENSMUST00000023826.5">
    <property type="protein sequence ID" value="ENSMUSP00000023826.5"/>
    <property type="gene ID" value="ENSMUSG00000023064.5"/>
</dbReference>
<dbReference type="GeneID" id="20618"/>
<dbReference type="KEGG" id="mmu:20618"/>
<dbReference type="UCSC" id="uc007tau.2">
    <property type="organism name" value="mouse"/>
</dbReference>
<dbReference type="AGR" id="MGI:1298397"/>
<dbReference type="CTD" id="6623"/>
<dbReference type="MGI" id="MGI:1298397">
    <property type="gene designation" value="Sncg"/>
</dbReference>
<dbReference type="VEuPathDB" id="HostDB:ENSMUSG00000023064"/>
<dbReference type="eggNOG" id="ENOG502S3WF">
    <property type="taxonomic scope" value="Eukaryota"/>
</dbReference>
<dbReference type="GeneTree" id="ENSGT00950000183175"/>
<dbReference type="HOGENOM" id="CLU_129378_0_0_1"/>
<dbReference type="InParanoid" id="Q9Z0F7"/>
<dbReference type="OMA" id="TCERIEV"/>
<dbReference type="OrthoDB" id="9942391at2759"/>
<dbReference type="PhylomeDB" id="Q9Z0F7"/>
<dbReference type="TreeFam" id="TF332776"/>
<dbReference type="BioGRID-ORCS" id="20618">
    <property type="hits" value="1 hit in 77 CRISPR screens"/>
</dbReference>
<dbReference type="ChiTaRS" id="Sncg">
    <property type="organism name" value="mouse"/>
</dbReference>
<dbReference type="PRO" id="PR:Q9Z0F7"/>
<dbReference type="Proteomes" id="UP000000589">
    <property type="component" value="Chromosome 14"/>
</dbReference>
<dbReference type="RNAct" id="Q9Z0F7">
    <property type="molecule type" value="protein"/>
</dbReference>
<dbReference type="Bgee" id="ENSMUSG00000023064">
    <property type="expression patterns" value="Expressed in facial nucleus and 198 other cell types or tissues"/>
</dbReference>
<dbReference type="ExpressionAtlas" id="Q9Z0F7">
    <property type="expression patterns" value="baseline and differential"/>
</dbReference>
<dbReference type="GO" id="GO:0030424">
    <property type="term" value="C:axon"/>
    <property type="evidence" value="ECO:0000314"/>
    <property type="project" value="MGI"/>
</dbReference>
<dbReference type="GO" id="GO:0005813">
    <property type="term" value="C:centrosome"/>
    <property type="evidence" value="ECO:0007669"/>
    <property type="project" value="UniProtKB-SubCell"/>
</dbReference>
<dbReference type="GO" id="GO:0005737">
    <property type="term" value="C:cytoplasm"/>
    <property type="evidence" value="ECO:0000314"/>
    <property type="project" value="MGI"/>
</dbReference>
<dbReference type="GO" id="GO:0005829">
    <property type="term" value="C:cytosol"/>
    <property type="evidence" value="ECO:0007669"/>
    <property type="project" value="Ensembl"/>
</dbReference>
<dbReference type="GO" id="GO:0005794">
    <property type="term" value="C:Golgi apparatus"/>
    <property type="evidence" value="ECO:0007669"/>
    <property type="project" value="Ensembl"/>
</dbReference>
<dbReference type="GO" id="GO:0043025">
    <property type="term" value="C:neuronal cell body"/>
    <property type="evidence" value="ECO:0000314"/>
    <property type="project" value="MGI"/>
</dbReference>
<dbReference type="GO" id="GO:0048471">
    <property type="term" value="C:perinuclear region of cytoplasm"/>
    <property type="evidence" value="ECO:0007669"/>
    <property type="project" value="UniProtKB-SubCell"/>
</dbReference>
<dbReference type="GO" id="GO:0005819">
    <property type="term" value="C:spindle"/>
    <property type="evidence" value="ECO:0007669"/>
    <property type="project" value="UniProtKB-SubCell"/>
</dbReference>
<dbReference type="GO" id="GO:0045202">
    <property type="term" value="C:synapse"/>
    <property type="evidence" value="ECO:0007669"/>
    <property type="project" value="GOC"/>
</dbReference>
<dbReference type="GO" id="GO:0008344">
    <property type="term" value="P:adult locomotory behavior"/>
    <property type="evidence" value="ECO:0000316"/>
    <property type="project" value="MGI"/>
</dbReference>
<dbReference type="GO" id="GO:0007268">
    <property type="term" value="P:chemical synaptic transmission"/>
    <property type="evidence" value="ECO:0000316"/>
    <property type="project" value="MGI"/>
</dbReference>
<dbReference type="GO" id="GO:0009306">
    <property type="term" value="P:protein secretion"/>
    <property type="evidence" value="ECO:0000314"/>
    <property type="project" value="UniProtKB"/>
</dbReference>
<dbReference type="GO" id="GO:0014059">
    <property type="term" value="P:regulation of dopamine secretion"/>
    <property type="evidence" value="ECO:0000316"/>
    <property type="project" value="MGI"/>
</dbReference>
<dbReference type="GO" id="GO:0046928">
    <property type="term" value="P:regulation of neurotransmitter secretion"/>
    <property type="evidence" value="ECO:0000316"/>
    <property type="project" value="MGI"/>
</dbReference>
<dbReference type="GO" id="GO:0050808">
    <property type="term" value="P:synapse organization"/>
    <property type="evidence" value="ECO:0000316"/>
    <property type="project" value="MGI"/>
</dbReference>
<dbReference type="FunFam" id="1.10.287.700:FF:000002">
    <property type="entry name" value="Gamma-synuclein"/>
    <property type="match status" value="1"/>
</dbReference>
<dbReference type="Gene3D" id="1.10.287.700">
    <property type="entry name" value="Helix hairpin bin"/>
    <property type="match status" value="1"/>
</dbReference>
<dbReference type="InterPro" id="IPR001058">
    <property type="entry name" value="Synuclein"/>
</dbReference>
<dbReference type="InterPro" id="IPR002462">
    <property type="entry name" value="Synuclein_gamma"/>
</dbReference>
<dbReference type="PANTHER" id="PTHR13820:SF10">
    <property type="entry name" value="GAMMA-SYNUCLEIN"/>
    <property type="match status" value="1"/>
</dbReference>
<dbReference type="PANTHER" id="PTHR13820">
    <property type="entry name" value="SYNUCLEIN"/>
    <property type="match status" value="1"/>
</dbReference>
<dbReference type="Pfam" id="PF01387">
    <property type="entry name" value="Synuclein"/>
    <property type="match status" value="1"/>
</dbReference>
<dbReference type="PRINTS" id="PR01214">
    <property type="entry name" value="GSYNUCLEIN"/>
</dbReference>
<dbReference type="PRINTS" id="PR01211">
    <property type="entry name" value="SYNUCLEIN"/>
</dbReference>
<dbReference type="SUPFAM" id="SSF118375">
    <property type="entry name" value="Synuclein"/>
    <property type="match status" value="1"/>
</dbReference>
<accession>Q9Z0F7</accession>
<protein>
    <recommendedName>
        <fullName>Gamma-synuclein</fullName>
    </recommendedName>
    <alternativeName>
        <fullName>Persyn</fullName>
    </alternativeName>
</protein>